<protein>
    <recommendedName>
        <fullName>Probable metalloreductase AIM14</fullName>
        <ecNumber>1.16.1.-</ecNumber>
    </recommendedName>
</protein>
<comment type="function">
    <text evidence="1">Probable cell surface metalloreductase. May be involved in iron or copper homeostasis (By similarity).</text>
</comment>
<comment type="subcellular location">
    <subcellularLocation>
        <location evidence="1">Membrane</location>
        <topology evidence="1">Multi-pass membrane protein</topology>
    </subcellularLocation>
</comment>
<comment type="similarity">
    <text evidence="4">Belongs to the ferric reductase (FRE) family. AIM14 subfamily.</text>
</comment>
<gene>
    <name type="primary">AIM14</name>
    <name type="ordered locus">YALI0F18348g</name>
</gene>
<evidence type="ECO:0000250" key="1"/>
<evidence type="ECO:0000255" key="2"/>
<evidence type="ECO:0000256" key="3">
    <source>
        <dbReference type="SAM" id="MobiDB-lite"/>
    </source>
</evidence>
<evidence type="ECO:0000305" key="4"/>
<dbReference type="EC" id="1.16.1.-"/>
<dbReference type="EMBL" id="CR382132">
    <property type="protein sequence ID" value="CAG78383.1"/>
    <property type="molecule type" value="Genomic_DNA"/>
</dbReference>
<dbReference type="RefSeq" id="XP_505574.1">
    <property type="nucleotide sequence ID" value="XM_505574.1"/>
</dbReference>
<dbReference type="SMR" id="Q6C188"/>
<dbReference type="FunCoup" id="Q6C188">
    <property type="interactions" value="11"/>
</dbReference>
<dbReference type="EnsemblFungi" id="CAG78383">
    <property type="protein sequence ID" value="CAG78383"/>
    <property type="gene ID" value="YALI0_F18348g"/>
</dbReference>
<dbReference type="KEGG" id="yli:2907808"/>
<dbReference type="VEuPathDB" id="FungiDB:YALI0_F18348g"/>
<dbReference type="HOGENOM" id="CLU_036508_0_0_1"/>
<dbReference type="InParanoid" id="Q6C188"/>
<dbReference type="OMA" id="GRMAYCL"/>
<dbReference type="OrthoDB" id="126120at4891"/>
<dbReference type="Proteomes" id="UP000001300">
    <property type="component" value="Chromosome F"/>
</dbReference>
<dbReference type="GO" id="GO:0005886">
    <property type="term" value="C:plasma membrane"/>
    <property type="evidence" value="ECO:0000318"/>
    <property type="project" value="GO_Central"/>
</dbReference>
<dbReference type="GO" id="GO:0000293">
    <property type="term" value="F:ferric-chelate reductase activity"/>
    <property type="evidence" value="ECO:0000318"/>
    <property type="project" value="GO_Central"/>
</dbReference>
<dbReference type="GO" id="GO:0033215">
    <property type="term" value="P:reductive iron assimilation"/>
    <property type="evidence" value="ECO:0000318"/>
    <property type="project" value="GO_Central"/>
</dbReference>
<dbReference type="CDD" id="cd06186">
    <property type="entry name" value="NOX_Duox_like_FAD_NADP"/>
    <property type="match status" value="1"/>
</dbReference>
<dbReference type="Gene3D" id="3.40.50.80">
    <property type="entry name" value="Nucleotide-binding domain of ferredoxin-NADP reductase (FNR) module"/>
    <property type="match status" value="1"/>
</dbReference>
<dbReference type="InterPro" id="IPR013112">
    <property type="entry name" value="FAD-bd_8"/>
</dbReference>
<dbReference type="InterPro" id="IPR013130">
    <property type="entry name" value="Fe3_Rdtase_TM_dom"/>
</dbReference>
<dbReference type="InterPro" id="IPR013121">
    <property type="entry name" value="Fe_red_NAD-bd_6"/>
</dbReference>
<dbReference type="InterPro" id="IPR051410">
    <property type="entry name" value="Ferric/Cupric_Reductase"/>
</dbReference>
<dbReference type="InterPro" id="IPR039261">
    <property type="entry name" value="FNR_nucleotide-bd"/>
</dbReference>
<dbReference type="PANTHER" id="PTHR32361:SF9">
    <property type="entry name" value="FERRIC REDUCTASE TRANSMEMBRANE COMPONENT 3-RELATED"/>
    <property type="match status" value="1"/>
</dbReference>
<dbReference type="PANTHER" id="PTHR32361">
    <property type="entry name" value="FERRIC/CUPRIC REDUCTASE TRANSMEMBRANE COMPONENT"/>
    <property type="match status" value="1"/>
</dbReference>
<dbReference type="Pfam" id="PF08022">
    <property type="entry name" value="FAD_binding_8"/>
    <property type="match status" value="1"/>
</dbReference>
<dbReference type="Pfam" id="PF01794">
    <property type="entry name" value="Ferric_reduct"/>
    <property type="match status" value="1"/>
</dbReference>
<dbReference type="Pfam" id="PF08030">
    <property type="entry name" value="NAD_binding_6"/>
    <property type="match status" value="1"/>
</dbReference>
<dbReference type="SFLD" id="SFLDF00463">
    <property type="entry name" value="AIM14"/>
    <property type="match status" value="1"/>
</dbReference>
<dbReference type="SFLD" id="SFLDS00052">
    <property type="entry name" value="Ferric_Reductase_Domain"/>
    <property type="match status" value="1"/>
</dbReference>
<dbReference type="SFLD" id="SFLDG01168">
    <property type="entry name" value="Ferric_reductase_subgroup_(FRE"/>
    <property type="match status" value="1"/>
</dbReference>
<dbReference type="SUPFAM" id="SSF52343">
    <property type="entry name" value="Ferredoxin reductase-like, C-terminal NADP-linked domain"/>
    <property type="match status" value="1"/>
</dbReference>
<keyword id="KW-0249">Electron transport</keyword>
<keyword id="KW-0274">FAD</keyword>
<keyword id="KW-0285">Flavoprotein</keyword>
<keyword id="KW-0406">Ion transport</keyword>
<keyword id="KW-0472">Membrane</keyword>
<keyword id="KW-0521">NADP</keyword>
<keyword id="KW-0560">Oxidoreductase</keyword>
<keyword id="KW-1185">Reference proteome</keyword>
<keyword id="KW-0812">Transmembrane</keyword>
<keyword id="KW-1133">Transmembrane helix</keyword>
<keyword id="KW-0813">Transport</keyword>
<reference key="1">
    <citation type="journal article" date="2004" name="Nature">
        <title>Genome evolution in yeasts.</title>
        <authorList>
            <person name="Dujon B."/>
            <person name="Sherman D."/>
            <person name="Fischer G."/>
            <person name="Durrens P."/>
            <person name="Casaregola S."/>
            <person name="Lafontaine I."/>
            <person name="de Montigny J."/>
            <person name="Marck C."/>
            <person name="Neuveglise C."/>
            <person name="Talla E."/>
            <person name="Goffard N."/>
            <person name="Frangeul L."/>
            <person name="Aigle M."/>
            <person name="Anthouard V."/>
            <person name="Babour A."/>
            <person name="Barbe V."/>
            <person name="Barnay S."/>
            <person name="Blanchin S."/>
            <person name="Beckerich J.-M."/>
            <person name="Beyne E."/>
            <person name="Bleykasten C."/>
            <person name="Boisrame A."/>
            <person name="Boyer J."/>
            <person name="Cattolico L."/>
            <person name="Confanioleri F."/>
            <person name="de Daruvar A."/>
            <person name="Despons L."/>
            <person name="Fabre E."/>
            <person name="Fairhead C."/>
            <person name="Ferry-Dumazet H."/>
            <person name="Groppi A."/>
            <person name="Hantraye F."/>
            <person name="Hennequin C."/>
            <person name="Jauniaux N."/>
            <person name="Joyet P."/>
            <person name="Kachouri R."/>
            <person name="Kerrest A."/>
            <person name="Koszul R."/>
            <person name="Lemaire M."/>
            <person name="Lesur I."/>
            <person name="Ma L."/>
            <person name="Muller H."/>
            <person name="Nicaud J.-M."/>
            <person name="Nikolski M."/>
            <person name="Oztas S."/>
            <person name="Ozier-Kalogeropoulos O."/>
            <person name="Pellenz S."/>
            <person name="Potier S."/>
            <person name="Richard G.-F."/>
            <person name="Straub M.-L."/>
            <person name="Suleau A."/>
            <person name="Swennen D."/>
            <person name="Tekaia F."/>
            <person name="Wesolowski-Louvel M."/>
            <person name="Westhof E."/>
            <person name="Wirth B."/>
            <person name="Zeniou-Meyer M."/>
            <person name="Zivanovic Y."/>
            <person name="Bolotin-Fukuhara M."/>
            <person name="Thierry A."/>
            <person name="Bouchier C."/>
            <person name="Caudron B."/>
            <person name="Scarpelli C."/>
            <person name="Gaillardin C."/>
            <person name="Weissenbach J."/>
            <person name="Wincker P."/>
            <person name="Souciet J.-L."/>
        </authorList>
    </citation>
    <scope>NUCLEOTIDE SEQUENCE [LARGE SCALE GENOMIC DNA]</scope>
    <source>
        <strain>CLIB 122 / E 150</strain>
    </source>
</reference>
<proteinExistence type="inferred from homology"/>
<accession>Q6C188</accession>
<sequence>MLEKRHGDHHNANIKYGTFVLVISLLVVCYIAVRNLTQPEVRARTKRDLRLPLWLSVLLWTALVIGMGVIHVEELNEAAKRFGRLCYALLPLIVFLAIRPSPLPRTFYLKLLPLHKWLGRLATLVGVVHGVLYTVHFVKKNEFYKVFKFDNFLGVIILAVFLVMVVTSLPFFRKRMYSLFYTIHYLSAWFVAIATIFHARPGVGWLFFWVALFMGSSLLYRVLASSTVQIESTEAMGPDLHRVTFPRSILPEFFVPASHIRVSRTLRNPLSWISSTHPYTISSLPSDDHVELIVRPTKFSLAHAASGTQFAVYGPFESLPDDFFSTANRVLVFAGGAGISFALPVVQTLAKAGISHKLVWVLRNKAGVSEVESRLGETPTDIYITGQDPFLGEGVVYAKDAEGTAGLLSEDMEMEEIGQEDEDRERDELDDLLSEDEGSSSQDSTKGAHKNKGKDQDNGKREASQSITYHDGRPQPADTASAYFLDRSAPEGKWILACGPNGLVVTAEQAAKKTGVRFCNETYSM</sequence>
<name>AIM14_YARLI</name>
<organism>
    <name type="scientific">Yarrowia lipolytica (strain CLIB 122 / E 150)</name>
    <name type="common">Yeast</name>
    <name type="synonym">Candida lipolytica</name>
    <dbReference type="NCBI Taxonomy" id="284591"/>
    <lineage>
        <taxon>Eukaryota</taxon>
        <taxon>Fungi</taxon>
        <taxon>Dikarya</taxon>
        <taxon>Ascomycota</taxon>
        <taxon>Saccharomycotina</taxon>
        <taxon>Dipodascomycetes</taxon>
        <taxon>Dipodascales</taxon>
        <taxon>Dipodascales incertae sedis</taxon>
        <taxon>Yarrowia</taxon>
    </lineage>
</organism>
<feature type="chain" id="PRO_0000408750" description="Probable metalloreductase AIM14">
    <location>
        <begin position="1"/>
        <end position="525"/>
    </location>
</feature>
<feature type="transmembrane region" description="Helical" evidence="2">
    <location>
        <begin position="13"/>
        <end position="33"/>
    </location>
</feature>
<feature type="transmembrane region" description="Helical" evidence="2">
    <location>
        <begin position="52"/>
        <end position="72"/>
    </location>
</feature>
<feature type="transmembrane region" description="Helical" evidence="2">
    <location>
        <begin position="82"/>
        <end position="102"/>
    </location>
</feature>
<feature type="transmembrane region" description="Helical" evidence="2">
    <location>
        <begin position="118"/>
        <end position="138"/>
    </location>
</feature>
<feature type="transmembrane region" description="Helical" evidence="2">
    <location>
        <begin position="152"/>
        <end position="172"/>
    </location>
</feature>
<feature type="transmembrane region" description="Helical" evidence="2">
    <location>
        <begin position="179"/>
        <end position="199"/>
    </location>
</feature>
<feature type="transmembrane region" description="Helical" evidence="2">
    <location>
        <begin position="203"/>
        <end position="223"/>
    </location>
</feature>
<feature type="domain" description="Ferric oxidoreductase">
    <location>
        <begin position="82"/>
        <end position="194"/>
    </location>
</feature>
<feature type="domain" description="FAD-binding FR-type">
    <location>
        <begin position="215"/>
        <end position="344"/>
    </location>
</feature>
<feature type="region of interest" description="Disordered" evidence="3">
    <location>
        <begin position="407"/>
        <end position="478"/>
    </location>
</feature>
<feature type="compositionally biased region" description="Acidic residues" evidence="3">
    <location>
        <begin position="410"/>
        <end position="438"/>
    </location>
</feature>
<feature type="compositionally biased region" description="Basic and acidic residues" evidence="3">
    <location>
        <begin position="453"/>
        <end position="463"/>
    </location>
</feature>